<accession>Q8FBD0</accession>
<sequence>MIKKIGVLTSGGDAPGMNAAIRGVVRSALTEGLEVMGIYDGYLGLYEDRMVQLDRYSVSDMINRGGTFLGSARFPEFRDENIRAVAIENLKKRGIDALVVIGGDGSYMGAMRLTEMGFPCIGLPGTIDNDIKGTDYTIGFFTALSTVVEAIDRLRDTSSSHQRISVVEVMGRYCGDLTLAAAIAGGCEFVVVPEVEFSREDLVNEIKAGIAKGKKHAIVAITEHMCDVDELAHFIEKETGRETRATVLGHIQRGGSPVPYDRILASRMGAYAIELLLAGYGGRCVGIQNEQLVHHDIIDAIENMKRPFKGDWLDCAKKLY</sequence>
<organism>
    <name type="scientific">Escherichia coli O6:H1 (strain CFT073 / ATCC 700928 / UPEC)</name>
    <dbReference type="NCBI Taxonomy" id="199310"/>
    <lineage>
        <taxon>Bacteria</taxon>
        <taxon>Pseudomonadati</taxon>
        <taxon>Pseudomonadota</taxon>
        <taxon>Gammaproteobacteria</taxon>
        <taxon>Enterobacterales</taxon>
        <taxon>Enterobacteriaceae</taxon>
        <taxon>Escherichia</taxon>
    </lineage>
</organism>
<dbReference type="EC" id="2.7.1.11" evidence="1"/>
<dbReference type="EMBL" id="AE014075">
    <property type="protein sequence ID" value="AAN83295.1"/>
    <property type="status" value="ALT_INIT"/>
    <property type="molecule type" value="Genomic_DNA"/>
</dbReference>
<dbReference type="RefSeq" id="WP_001318165.1">
    <property type="nucleotide sequence ID" value="NZ_CP051263.1"/>
</dbReference>
<dbReference type="SMR" id="Q8FBD0"/>
<dbReference type="STRING" id="199310.c4867"/>
<dbReference type="KEGG" id="ecc:c4867"/>
<dbReference type="eggNOG" id="COG0205">
    <property type="taxonomic scope" value="Bacteria"/>
</dbReference>
<dbReference type="HOGENOM" id="CLU_020655_0_1_6"/>
<dbReference type="UniPathway" id="UPA00109">
    <property type="reaction ID" value="UER00182"/>
</dbReference>
<dbReference type="Proteomes" id="UP000001410">
    <property type="component" value="Chromosome"/>
</dbReference>
<dbReference type="GO" id="GO:0005945">
    <property type="term" value="C:6-phosphofructokinase complex"/>
    <property type="evidence" value="ECO:0007669"/>
    <property type="project" value="TreeGrafter"/>
</dbReference>
<dbReference type="GO" id="GO:0003872">
    <property type="term" value="F:6-phosphofructokinase activity"/>
    <property type="evidence" value="ECO:0007669"/>
    <property type="project" value="UniProtKB-UniRule"/>
</dbReference>
<dbReference type="GO" id="GO:0016208">
    <property type="term" value="F:AMP binding"/>
    <property type="evidence" value="ECO:0007669"/>
    <property type="project" value="TreeGrafter"/>
</dbReference>
<dbReference type="GO" id="GO:0005524">
    <property type="term" value="F:ATP binding"/>
    <property type="evidence" value="ECO:0007669"/>
    <property type="project" value="UniProtKB-KW"/>
</dbReference>
<dbReference type="GO" id="GO:0070095">
    <property type="term" value="F:fructose-6-phosphate binding"/>
    <property type="evidence" value="ECO:0007669"/>
    <property type="project" value="TreeGrafter"/>
</dbReference>
<dbReference type="GO" id="GO:0042802">
    <property type="term" value="F:identical protein binding"/>
    <property type="evidence" value="ECO:0007669"/>
    <property type="project" value="TreeGrafter"/>
</dbReference>
<dbReference type="GO" id="GO:0046872">
    <property type="term" value="F:metal ion binding"/>
    <property type="evidence" value="ECO:0007669"/>
    <property type="project" value="UniProtKB-KW"/>
</dbReference>
<dbReference type="GO" id="GO:0048029">
    <property type="term" value="F:monosaccharide binding"/>
    <property type="evidence" value="ECO:0007669"/>
    <property type="project" value="TreeGrafter"/>
</dbReference>
<dbReference type="GO" id="GO:0061621">
    <property type="term" value="P:canonical glycolysis"/>
    <property type="evidence" value="ECO:0007669"/>
    <property type="project" value="TreeGrafter"/>
</dbReference>
<dbReference type="GO" id="GO:0030388">
    <property type="term" value="P:fructose 1,6-bisphosphate metabolic process"/>
    <property type="evidence" value="ECO:0007669"/>
    <property type="project" value="TreeGrafter"/>
</dbReference>
<dbReference type="GO" id="GO:0006002">
    <property type="term" value="P:fructose 6-phosphate metabolic process"/>
    <property type="evidence" value="ECO:0007669"/>
    <property type="project" value="InterPro"/>
</dbReference>
<dbReference type="CDD" id="cd00763">
    <property type="entry name" value="Bacterial_PFK"/>
    <property type="match status" value="1"/>
</dbReference>
<dbReference type="FunFam" id="3.40.50.450:FF:000001">
    <property type="entry name" value="ATP-dependent 6-phosphofructokinase"/>
    <property type="match status" value="1"/>
</dbReference>
<dbReference type="FunFam" id="3.40.50.460:FF:000002">
    <property type="entry name" value="ATP-dependent 6-phosphofructokinase"/>
    <property type="match status" value="1"/>
</dbReference>
<dbReference type="Gene3D" id="3.40.50.450">
    <property type="match status" value="1"/>
</dbReference>
<dbReference type="Gene3D" id="3.40.50.460">
    <property type="entry name" value="Phosphofructokinase domain"/>
    <property type="match status" value="1"/>
</dbReference>
<dbReference type="HAMAP" id="MF_00339">
    <property type="entry name" value="Phosphofructokinase_I_B1"/>
    <property type="match status" value="1"/>
</dbReference>
<dbReference type="InterPro" id="IPR022953">
    <property type="entry name" value="ATP_PFK"/>
</dbReference>
<dbReference type="InterPro" id="IPR012003">
    <property type="entry name" value="ATP_PFK_prok-type"/>
</dbReference>
<dbReference type="InterPro" id="IPR012828">
    <property type="entry name" value="PFKA_ATP_prok"/>
</dbReference>
<dbReference type="InterPro" id="IPR015912">
    <property type="entry name" value="Phosphofructokinase_CS"/>
</dbReference>
<dbReference type="InterPro" id="IPR000023">
    <property type="entry name" value="Phosphofructokinase_dom"/>
</dbReference>
<dbReference type="InterPro" id="IPR035966">
    <property type="entry name" value="PKF_sf"/>
</dbReference>
<dbReference type="NCBIfam" id="TIGR02482">
    <property type="entry name" value="PFKA_ATP"/>
    <property type="match status" value="1"/>
</dbReference>
<dbReference type="NCBIfam" id="NF002872">
    <property type="entry name" value="PRK03202.1"/>
    <property type="match status" value="1"/>
</dbReference>
<dbReference type="PANTHER" id="PTHR13697:SF4">
    <property type="entry name" value="ATP-DEPENDENT 6-PHOSPHOFRUCTOKINASE"/>
    <property type="match status" value="1"/>
</dbReference>
<dbReference type="PANTHER" id="PTHR13697">
    <property type="entry name" value="PHOSPHOFRUCTOKINASE"/>
    <property type="match status" value="1"/>
</dbReference>
<dbReference type="Pfam" id="PF00365">
    <property type="entry name" value="PFK"/>
    <property type="match status" value="1"/>
</dbReference>
<dbReference type="PIRSF" id="PIRSF000532">
    <property type="entry name" value="ATP_PFK_prok"/>
    <property type="match status" value="1"/>
</dbReference>
<dbReference type="PRINTS" id="PR00476">
    <property type="entry name" value="PHFRCTKINASE"/>
</dbReference>
<dbReference type="SUPFAM" id="SSF53784">
    <property type="entry name" value="Phosphofructokinase"/>
    <property type="match status" value="1"/>
</dbReference>
<dbReference type="PROSITE" id="PS00433">
    <property type="entry name" value="PHOSPHOFRUCTOKINASE"/>
    <property type="match status" value="1"/>
</dbReference>
<comment type="function">
    <text evidence="1">Catalyzes the phosphorylation of D-fructose 6-phosphate to fructose 1,6-bisphosphate by ATP, the first committing step of glycolysis.</text>
</comment>
<comment type="catalytic activity">
    <reaction evidence="1">
        <text>beta-D-fructose 6-phosphate + ATP = beta-D-fructose 1,6-bisphosphate + ADP + H(+)</text>
        <dbReference type="Rhea" id="RHEA:16109"/>
        <dbReference type="ChEBI" id="CHEBI:15378"/>
        <dbReference type="ChEBI" id="CHEBI:30616"/>
        <dbReference type="ChEBI" id="CHEBI:32966"/>
        <dbReference type="ChEBI" id="CHEBI:57634"/>
        <dbReference type="ChEBI" id="CHEBI:456216"/>
        <dbReference type="EC" id="2.7.1.11"/>
    </reaction>
</comment>
<comment type="cofactor">
    <cofactor evidence="1">
        <name>Mg(2+)</name>
        <dbReference type="ChEBI" id="CHEBI:18420"/>
    </cofactor>
</comment>
<comment type="activity regulation">
    <text evidence="1">Allosterically activated by ADP and other diphosphonucleosides, and allosterically inhibited by phosphoenolpyruvate.</text>
</comment>
<comment type="pathway">
    <text evidence="1">Carbohydrate degradation; glycolysis; D-glyceraldehyde 3-phosphate and glycerone phosphate from D-glucose: step 3/4.</text>
</comment>
<comment type="subunit">
    <text evidence="1">Homotetramer.</text>
</comment>
<comment type="subcellular location">
    <subcellularLocation>
        <location evidence="1">Cytoplasm</location>
    </subcellularLocation>
</comment>
<comment type="similarity">
    <text evidence="1">Belongs to the phosphofructokinase type A (PFKA) family. ATP-dependent PFK group I subfamily. Prokaryotic clade 'B1' sub-subfamily.</text>
</comment>
<comment type="sequence caution" evidence="2">
    <conflict type="erroneous initiation">
        <sequence resource="EMBL-CDS" id="AAN83295"/>
    </conflict>
</comment>
<evidence type="ECO:0000255" key="1">
    <source>
        <dbReference type="HAMAP-Rule" id="MF_00339"/>
    </source>
</evidence>
<evidence type="ECO:0000305" key="2"/>
<keyword id="KW-0021">Allosteric enzyme</keyword>
<keyword id="KW-0067">ATP-binding</keyword>
<keyword id="KW-0963">Cytoplasm</keyword>
<keyword id="KW-0324">Glycolysis</keyword>
<keyword id="KW-0418">Kinase</keyword>
<keyword id="KW-0460">Magnesium</keyword>
<keyword id="KW-0479">Metal-binding</keyword>
<keyword id="KW-0547">Nucleotide-binding</keyword>
<keyword id="KW-1185">Reference proteome</keyword>
<keyword id="KW-0808">Transferase</keyword>
<name>PFKA_ECOL6</name>
<proteinExistence type="inferred from homology"/>
<reference key="1">
    <citation type="journal article" date="2002" name="Proc. Natl. Acad. Sci. U.S.A.">
        <title>Extensive mosaic structure revealed by the complete genome sequence of uropathogenic Escherichia coli.</title>
        <authorList>
            <person name="Welch R.A."/>
            <person name="Burland V."/>
            <person name="Plunkett G. III"/>
            <person name="Redford P."/>
            <person name="Roesch P."/>
            <person name="Rasko D."/>
            <person name="Buckles E.L."/>
            <person name="Liou S.-R."/>
            <person name="Boutin A."/>
            <person name="Hackett J."/>
            <person name="Stroud D."/>
            <person name="Mayhew G.F."/>
            <person name="Rose D.J."/>
            <person name="Zhou S."/>
            <person name="Schwartz D.C."/>
            <person name="Perna N.T."/>
            <person name="Mobley H.L.T."/>
            <person name="Donnenberg M.S."/>
            <person name="Blattner F.R."/>
        </authorList>
    </citation>
    <scope>NUCLEOTIDE SEQUENCE [LARGE SCALE GENOMIC DNA]</scope>
    <source>
        <strain>CFT073 / ATCC 700928 / UPEC</strain>
    </source>
</reference>
<gene>
    <name evidence="1" type="primary">pfkA</name>
    <name type="ordered locus">c4867</name>
</gene>
<protein>
    <recommendedName>
        <fullName evidence="1">ATP-dependent 6-phosphofructokinase isozyme 1</fullName>
        <shortName evidence="1">ATP-PFK 1</shortName>
        <shortName evidence="1">Phosphofructokinase 1</shortName>
        <ecNumber evidence="1">2.7.1.11</ecNumber>
    </recommendedName>
    <alternativeName>
        <fullName>6-phosphofructokinase isozyme I</fullName>
    </alternativeName>
</protein>
<feature type="chain" id="PRO_0000111952" description="ATP-dependent 6-phosphofructokinase isozyme 1">
    <location>
        <begin position="1"/>
        <end position="320"/>
    </location>
</feature>
<feature type="active site" description="Proton acceptor" evidence="1">
    <location>
        <position position="128"/>
    </location>
</feature>
<feature type="binding site" evidence="1">
    <location>
        <position position="12"/>
    </location>
    <ligand>
        <name>ATP</name>
        <dbReference type="ChEBI" id="CHEBI:30616"/>
    </ligand>
</feature>
<feature type="binding site" evidence="1">
    <location>
        <begin position="22"/>
        <end position="26"/>
    </location>
    <ligand>
        <name>ADP</name>
        <dbReference type="ChEBI" id="CHEBI:456216"/>
        <note>allosteric activator; ligand shared between dimeric partners</note>
    </ligand>
</feature>
<feature type="binding site" evidence="1">
    <location>
        <begin position="55"/>
        <end position="60"/>
    </location>
    <ligand>
        <name>ADP</name>
        <dbReference type="ChEBI" id="CHEBI:456216"/>
        <note>allosteric activator; ligand shared between dimeric partners</note>
    </ligand>
</feature>
<feature type="binding site" evidence="1">
    <location>
        <begin position="73"/>
        <end position="74"/>
    </location>
    <ligand>
        <name>ATP</name>
        <dbReference type="ChEBI" id="CHEBI:30616"/>
    </ligand>
</feature>
<feature type="binding site" evidence="1">
    <location>
        <begin position="103"/>
        <end position="106"/>
    </location>
    <ligand>
        <name>ATP</name>
        <dbReference type="ChEBI" id="CHEBI:30616"/>
    </ligand>
</feature>
<feature type="binding site" evidence="1">
    <location>
        <position position="104"/>
    </location>
    <ligand>
        <name>Mg(2+)</name>
        <dbReference type="ChEBI" id="CHEBI:18420"/>
        <note>catalytic</note>
    </ligand>
</feature>
<feature type="binding site" description="in other chain" evidence="1">
    <location>
        <begin position="126"/>
        <end position="128"/>
    </location>
    <ligand>
        <name>substrate</name>
        <note>ligand shared between dimeric partners</note>
    </ligand>
</feature>
<feature type="binding site" description="in other chain" evidence="1">
    <location>
        <position position="155"/>
    </location>
    <ligand>
        <name>ADP</name>
        <dbReference type="ChEBI" id="CHEBI:456216"/>
        <note>allosteric activator; ligand shared between dimeric partners</note>
    </ligand>
</feature>
<feature type="binding site" evidence="1">
    <location>
        <position position="163"/>
    </location>
    <ligand>
        <name>substrate</name>
        <note>ligand shared between dimeric partners</note>
    </ligand>
</feature>
<feature type="binding site" description="in other chain" evidence="1">
    <location>
        <begin position="170"/>
        <end position="172"/>
    </location>
    <ligand>
        <name>substrate</name>
        <note>ligand shared between dimeric partners</note>
    </ligand>
</feature>
<feature type="binding site" description="in other chain" evidence="1">
    <location>
        <begin position="186"/>
        <end position="188"/>
    </location>
    <ligand>
        <name>ADP</name>
        <dbReference type="ChEBI" id="CHEBI:456216"/>
        <note>allosteric activator; ligand shared between dimeric partners</note>
    </ligand>
</feature>
<feature type="binding site" description="in other chain" evidence="1">
    <location>
        <position position="212"/>
    </location>
    <ligand>
        <name>ADP</name>
        <dbReference type="ChEBI" id="CHEBI:456216"/>
        <note>allosteric activator; ligand shared between dimeric partners</note>
    </ligand>
</feature>
<feature type="binding site" description="in other chain" evidence="1">
    <location>
        <begin position="214"/>
        <end position="216"/>
    </location>
    <ligand>
        <name>ADP</name>
        <dbReference type="ChEBI" id="CHEBI:456216"/>
        <note>allosteric activator; ligand shared between dimeric partners</note>
    </ligand>
</feature>
<feature type="binding site" description="in other chain" evidence="1">
    <location>
        <position position="223"/>
    </location>
    <ligand>
        <name>substrate</name>
        <note>ligand shared between dimeric partners</note>
    </ligand>
</feature>
<feature type="binding site" evidence="1">
    <location>
        <position position="244"/>
    </location>
    <ligand>
        <name>substrate</name>
        <note>ligand shared between dimeric partners</note>
    </ligand>
</feature>
<feature type="binding site" description="in other chain" evidence="1">
    <location>
        <begin position="250"/>
        <end position="253"/>
    </location>
    <ligand>
        <name>substrate</name>
        <note>ligand shared between dimeric partners</note>
    </ligand>
</feature>